<proteinExistence type="evidence at transcript level"/>
<evidence type="ECO:0000250" key="1"/>
<evidence type="ECO:0000250" key="2">
    <source>
        <dbReference type="UniProtKB" id="P17213"/>
    </source>
</evidence>
<evidence type="ECO:0000250" key="3">
    <source>
        <dbReference type="UniProtKB" id="P18428"/>
    </source>
</evidence>
<evidence type="ECO:0000250" key="4">
    <source>
        <dbReference type="UniProtKB" id="Q61805"/>
    </source>
</evidence>
<evidence type="ECO:0000255" key="5"/>
<evidence type="ECO:0000305" key="6"/>
<name>LBP_BOVIN</name>
<comment type="function">
    <text evidence="3">Plays a role in the innate immune response. Binds to the lipid A moiety of bacterial lipopolysaccharides (LPS), a glycolipid present in the outer membrane of all Gram-negative bacteria. Acts as an affinity enhancer for CD14, facilitating its association with LPS. Promotes the release of cytokines in response to bacterial lipopolysaccharide.</text>
</comment>
<comment type="subunit">
    <text evidence="3">When bound to LPS, interacts (via C-terminus) with soluble and membrane-bound CD14.</text>
</comment>
<comment type="subcellular location">
    <subcellularLocation>
        <location evidence="3">Secreted</location>
    </subcellularLocation>
    <subcellularLocation>
        <location evidence="2">Cytoplasmic granule membrane</location>
    </subcellularLocation>
    <text evidence="2">Membrane-associated in polymorphonuclear Leukocytes (PMN) granules.</text>
</comment>
<comment type="similarity">
    <text evidence="6">Belongs to the BPI/LBP/Plunc superfamily. BPI/LBP family.</text>
</comment>
<keyword id="KW-0044">Antibiotic</keyword>
<keyword id="KW-0929">Antimicrobial</keyword>
<keyword id="KW-1015">Disulfide bond</keyword>
<keyword id="KW-0325">Glycoprotein</keyword>
<keyword id="KW-0391">Immunity</keyword>
<keyword id="KW-0399">Innate immunity</keyword>
<keyword id="KW-0445">Lipid transport</keyword>
<keyword id="KW-0472">Membrane</keyword>
<keyword id="KW-1185">Reference proteome</keyword>
<keyword id="KW-0964">Secreted</keyword>
<keyword id="KW-0732">Signal</keyword>
<keyword id="KW-0813">Transport</keyword>
<protein>
    <recommendedName>
        <fullName>Lipopolysaccharide-binding protein</fullName>
        <shortName>LBP</shortName>
    </recommendedName>
</protein>
<organism>
    <name type="scientific">Bos taurus</name>
    <name type="common">Bovine</name>
    <dbReference type="NCBI Taxonomy" id="9913"/>
    <lineage>
        <taxon>Eukaryota</taxon>
        <taxon>Metazoa</taxon>
        <taxon>Chordata</taxon>
        <taxon>Craniata</taxon>
        <taxon>Vertebrata</taxon>
        <taxon>Euteleostomi</taxon>
        <taxon>Mammalia</taxon>
        <taxon>Eutheria</taxon>
        <taxon>Laurasiatheria</taxon>
        <taxon>Artiodactyla</taxon>
        <taxon>Ruminantia</taxon>
        <taxon>Pecora</taxon>
        <taxon>Bovidae</taxon>
        <taxon>Bovinae</taxon>
        <taxon>Bos</taxon>
    </lineage>
</organism>
<feature type="signal peptide" evidence="1">
    <location>
        <begin position="1"/>
        <end position="25"/>
    </location>
</feature>
<feature type="chain" id="PRO_0000239847" description="Lipopolysaccharide-binding protein">
    <location>
        <begin position="26"/>
        <end position="481"/>
    </location>
</feature>
<feature type="glycosylation site" description="N-linked (GlcNAc...) asparagine" evidence="5">
    <location>
        <position position="300"/>
    </location>
</feature>
<feature type="glycosylation site" description="N-linked (GlcNAc...) asparagine" evidence="5">
    <location>
        <position position="355"/>
    </location>
</feature>
<feature type="glycosylation site" description="N-linked (GlcNAc...) asparagine" evidence="5">
    <location>
        <position position="386"/>
    </location>
</feature>
<feature type="glycosylation site" description="N-linked (GlcNAc...) asparagine" evidence="5">
    <location>
        <position position="394"/>
    </location>
</feature>
<feature type="disulfide bond" evidence="4">
    <location>
        <begin position="159"/>
        <end position="198"/>
    </location>
</feature>
<dbReference type="EMBL" id="BC110172">
    <property type="protein sequence ID" value="AAI10173.1"/>
    <property type="molecule type" value="mRNA"/>
</dbReference>
<dbReference type="RefSeq" id="NP_001033763.1">
    <property type="nucleotide sequence ID" value="NM_001038674.2"/>
</dbReference>
<dbReference type="SMR" id="Q2TBI0"/>
<dbReference type="FunCoup" id="Q2TBI0">
    <property type="interactions" value="225"/>
</dbReference>
<dbReference type="STRING" id="9913.ENSBTAP00000022428"/>
<dbReference type="GlyCosmos" id="Q2TBI0">
    <property type="glycosylation" value="4 sites, No reported glycans"/>
</dbReference>
<dbReference type="GlyGen" id="Q2TBI0">
    <property type="glycosylation" value="4 sites"/>
</dbReference>
<dbReference type="PaxDb" id="9913-ENSBTAP00000022428"/>
<dbReference type="PeptideAtlas" id="Q2TBI0"/>
<dbReference type="GeneID" id="512242"/>
<dbReference type="KEGG" id="bta:512242"/>
<dbReference type="CTD" id="3929"/>
<dbReference type="eggNOG" id="KOG4160">
    <property type="taxonomic scope" value="Eukaryota"/>
</dbReference>
<dbReference type="InParanoid" id="Q2TBI0"/>
<dbReference type="OrthoDB" id="10255543at2759"/>
<dbReference type="Proteomes" id="UP000009136">
    <property type="component" value="Unplaced"/>
</dbReference>
<dbReference type="GO" id="GO:0005615">
    <property type="term" value="C:extracellular space"/>
    <property type="evidence" value="ECO:0000250"/>
    <property type="project" value="UniProtKB"/>
</dbReference>
<dbReference type="GO" id="GO:0016020">
    <property type="term" value="C:membrane"/>
    <property type="evidence" value="ECO:0007669"/>
    <property type="project" value="UniProtKB-KW"/>
</dbReference>
<dbReference type="GO" id="GO:0001530">
    <property type="term" value="F:lipopolysaccharide binding"/>
    <property type="evidence" value="ECO:0000250"/>
    <property type="project" value="UniProtKB"/>
</dbReference>
<dbReference type="GO" id="GO:0006953">
    <property type="term" value="P:acute-phase response"/>
    <property type="evidence" value="ECO:0000318"/>
    <property type="project" value="GO_Central"/>
</dbReference>
<dbReference type="GO" id="GO:0071222">
    <property type="term" value="P:cellular response to lipopolysaccharide"/>
    <property type="evidence" value="ECO:0000250"/>
    <property type="project" value="UniProtKB"/>
</dbReference>
<dbReference type="GO" id="GO:0050829">
    <property type="term" value="P:defense response to Gram-negative bacterium"/>
    <property type="evidence" value="ECO:0000318"/>
    <property type="project" value="GO_Central"/>
</dbReference>
<dbReference type="GO" id="GO:0050830">
    <property type="term" value="P:defense response to Gram-positive bacterium"/>
    <property type="evidence" value="ECO:0000318"/>
    <property type="project" value="GO_Central"/>
</dbReference>
<dbReference type="GO" id="GO:0045087">
    <property type="term" value="P:innate immune response"/>
    <property type="evidence" value="ECO:0000318"/>
    <property type="project" value="GO_Central"/>
</dbReference>
<dbReference type="GO" id="GO:0006869">
    <property type="term" value="P:lipid transport"/>
    <property type="evidence" value="ECO:0007669"/>
    <property type="project" value="UniProtKB-KW"/>
</dbReference>
<dbReference type="GO" id="GO:0031663">
    <property type="term" value="P:lipopolysaccharide-mediated signaling pathway"/>
    <property type="evidence" value="ECO:0000318"/>
    <property type="project" value="GO_Central"/>
</dbReference>
<dbReference type="GO" id="GO:0002281">
    <property type="term" value="P:macrophage activation involved in immune response"/>
    <property type="evidence" value="ECO:0000250"/>
    <property type="project" value="UniProtKB"/>
</dbReference>
<dbReference type="GO" id="GO:0043032">
    <property type="term" value="P:positive regulation of macrophage activation"/>
    <property type="evidence" value="ECO:0000318"/>
    <property type="project" value="GO_Central"/>
</dbReference>
<dbReference type="GO" id="GO:0032760">
    <property type="term" value="P:positive regulation of tumor necrosis factor production"/>
    <property type="evidence" value="ECO:0000250"/>
    <property type="project" value="UniProtKB"/>
</dbReference>
<dbReference type="CDD" id="cd00025">
    <property type="entry name" value="BPI1"/>
    <property type="match status" value="1"/>
</dbReference>
<dbReference type="CDD" id="cd00026">
    <property type="entry name" value="BPI2"/>
    <property type="match status" value="1"/>
</dbReference>
<dbReference type="FunFam" id="3.15.20.10:FF:000001">
    <property type="entry name" value="Phospholipid transfer protein"/>
    <property type="match status" value="1"/>
</dbReference>
<dbReference type="FunFam" id="3.15.10.10:FF:000001">
    <property type="entry name" value="phospholipid transfer protein-like"/>
    <property type="match status" value="1"/>
</dbReference>
<dbReference type="Gene3D" id="3.15.10.10">
    <property type="entry name" value="Bactericidal permeability-increasing protein, domain 1"/>
    <property type="match status" value="1"/>
</dbReference>
<dbReference type="Gene3D" id="3.15.20.10">
    <property type="entry name" value="Bactericidal permeability-increasing protein, domain 2"/>
    <property type="match status" value="1"/>
</dbReference>
<dbReference type="InterPro" id="IPR017943">
    <property type="entry name" value="Bactericidal_perm-incr_a/b_dom"/>
</dbReference>
<dbReference type="InterPro" id="IPR030675">
    <property type="entry name" value="BPI/LBP"/>
</dbReference>
<dbReference type="InterPro" id="IPR032942">
    <property type="entry name" value="BPI/LBP/Plunc"/>
</dbReference>
<dbReference type="InterPro" id="IPR001124">
    <property type="entry name" value="Lipid-bd_serum_glycop_C"/>
</dbReference>
<dbReference type="InterPro" id="IPR017954">
    <property type="entry name" value="Lipid-bd_serum_glycop_CS"/>
</dbReference>
<dbReference type="InterPro" id="IPR017942">
    <property type="entry name" value="Lipid-bd_serum_glycop_N"/>
</dbReference>
<dbReference type="PANTHER" id="PTHR10504">
    <property type="entry name" value="BACTERICIDAL PERMEABILITY-INCREASING BPI PROTEIN-RELATED"/>
    <property type="match status" value="1"/>
</dbReference>
<dbReference type="PANTHER" id="PTHR10504:SF66">
    <property type="entry name" value="LIPOPOLYSACCHARIDE-BINDING PROTEIN"/>
    <property type="match status" value="1"/>
</dbReference>
<dbReference type="Pfam" id="PF01273">
    <property type="entry name" value="LBP_BPI_CETP"/>
    <property type="match status" value="1"/>
</dbReference>
<dbReference type="Pfam" id="PF02886">
    <property type="entry name" value="LBP_BPI_CETP_C"/>
    <property type="match status" value="1"/>
</dbReference>
<dbReference type="PIRSF" id="PIRSF002417">
    <property type="entry name" value="Lipid_binding_protein"/>
    <property type="match status" value="1"/>
</dbReference>
<dbReference type="SMART" id="SM00328">
    <property type="entry name" value="BPI1"/>
    <property type="match status" value="1"/>
</dbReference>
<dbReference type="SMART" id="SM00329">
    <property type="entry name" value="BPI2"/>
    <property type="match status" value="1"/>
</dbReference>
<dbReference type="SUPFAM" id="SSF55394">
    <property type="entry name" value="Bactericidal permeability-increasing protein, BPI"/>
    <property type="match status" value="2"/>
</dbReference>
<dbReference type="PROSITE" id="PS00400">
    <property type="entry name" value="LBP_BPI_CETP"/>
    <property type="match status" value="1"/>
</dbReference>
<reference key="1">
    <citation type="submission" date="2005-11" db="EMBL/GenBank/DDBJ databases">
        <authorList>
            <consortium name="NIH - Mammalian Gene Collection (MGC) project"/>
        </authorList>
    </citation>
    <scope>NUCLEOTIDE SEQUENCE [LARGE SCALE MRNA]</scope>
    <source>
        <strain>Crossbred X Angus</strain>
        <tissue>Liver</tissue>
    </source>
</reference>
<gene>
    <name type="primary">LBP</name>
</gene>
<sequence>MVTSTGTLPSLLLGTLLTFTSGALGANPGLVVRITDQGLEYVAQEELLALQSKLHKVTLPDFNGDVRIKHFGSVDYRFHSLNIQSCKLLGSALKLLPNQGLHFSISDSFIQVTGDWKVRKRILRLDGSFDVKVKGITISVNLLLDSEPSGRPKVAVSSCSSHIRDVEVHISGDLGWLLNLFHNQIESRFRRVLESKICEIIEDSVTSELQPYLQTLPVTTEIDHLAGLDYSLMGAPQATAQMLDVMFKGEIFSRDDRFPVAFLAPVMNLPEEHSRMVYFAISDYAFNTASLVYHKAGFLNFTITDDVIPPDSSIRQNTKSFRAFVPRIARLYPNTNLELQGAVISAPCLNFSPGNLSTAAQMEIEAFVLLPNSVKEPVFRLSVATNVSAMLTFNTSKITGFLEPGKIQVELKESKVGRFNVELLEALLNYYLLNNFYPKVNDKLAEGFPLPLLRKIQLYDPILQIHKDFLFLGTNVRYLRV</sequence>
<accession>Q2TBI0</accession>